<reference key="1">
    <citation type="journal article" date="2004" name="Nat. Biotechnol.">
        <title>Complete sequence and comparative genome analysis of the dairy bacterium Streptococcus thermophilus.</title>
        <authorList>
            <person name="Bolotin A."/>
            <person name="Quinquis B."/>
            <person name="Renault P."/>
            <person name="Sorokin A."/>
            <person name="Ehrlich S.D."/>
            <person name="Kulakauskas S."/>
            <person name="Lapidus A."/>
            <person name="Goltsman E."/>
            <person name="Mazur M."/>
            <person name="Pusch G.D."/>
            <person name="Fonstein M."/>
            <person name="Overbeek R."/>
            <person name="Kyprides N."/>
            <person name="Purnelle B."/>
            <person name="Prozzi D."/>
            <person name="Ngui K."/>
            <person name="Masuy D."/>
            <person name="Hancy F."/>
            <person name="Burteau S."/>
            <person name="Boutry M."/>
            <person name="Delcour J."/>
            <person name="Goffeau A."/>
            <person name="Hols P."/>
        </authorList>
    </citation>
    <scope>NUCLEOTIDE SEQUENCE [LARGE SCALE GENOMIC DNA]</scope>
    <source>
        <strain>CNRZ 1066</strain>
    </source>
</reference>
<name>MURG_STRT1</name>
<feature type="chain" id="PRO_0000225104" description="UDP-N-acetylglucosamine--N-acetylmuramyl-(pentapeptide) pyrophosphoryl-undecaprenol N-acetylglucosamine transferase">
    <location>
        <begin position="1"/>
        <end position="356"/>
    </location>
</feature>
<feature type="binding site" evidence="1">
    <location>
        <position position="198"/>
    </location>
    <ligand>
        <name>UDP-N-acetyl-alpha-D-glucosamine</name>
        <dbReference type="ChEBI" id="CHEBI:57705"/>
    </ligand>
</feature>
<feature type="binding site" evidence="1">
    <location>
        <position position="289"/>
    </location>
    <ligand>
        <name>UDP-N-acetyl-alpha-D-glucosamine</name>
        <dbReference type="ChEBI" id="CHEBI:57705"/>
    </ligand>
</feature>
<keyword id="KW-0131">Cell cycle</keyword>
<keyword id="KW-0132">Cell division</keyword>
<keyword id="KW-1003">Cell membrane</keyword>
<keyword id="KW-0133">Cell shape</keyword>
<keyword id="KW-0961">Cell wall biogenesis/degradation</keyword>
<keyword id="KW-0328">Glycosyltransferase</keyword>
<keyword id="KW-0472">Membrane</keyword>
<keyword id="KW-0573">Peptidoglycan synthesis</keyword>
<keyword id="KW-0808">Transferase</keyword>
<evidence type="ECO:0000255" key="1">
    <source>
        <dbReference type="HAMAP-Rule" id="MF_00033"/>
    </source>
</evidence>
<gene>
    <name evidence="1" type="primary">murG</name>
    <name type="ordered locus">str0732</name>
</gene>
<accession>Q5M0D4</accession>
<organism>
    <name type="scientific">Streptococcus thermophilus (strain CNRZ 1066)</name>
    <dbReference type="NCBI Taxonomy" id="299768"/>
    <lineage>
        <taxon>Bacteria</taxon>
        <taxon>Bacillati</taxon>
        <taxon>Bacillota</taxon>
        <taxon>Bacilli</taxon>
        <taxon>Lactobacillales</taxon>
        <taxon>Streptococcaceae</taxon>
        <taxon>Streptococcus</taxon>
    </lineage>
</organism>
<proteinExistence type="inferred from homology"/>
<protein>
    <recommendedName>
        <fullName evidence="1">UDP-N-acetylglucosamine--N-acetylmuramyl-(pentapeptide) pyrophosphoryl-undecaprenol N-acetylglucosamine transferase</fullName>
        <ecNumber evidence="1">2.4.1.227</ecNumber>
    </recommendedName>
    <alternativeName>
        <fullName evidence="1">Undecaprenyl-PP-MurNAc-pentapeptide-UDPGlcNAc GlcNAc transferase</fullName>
    </alternativeName>
</protein>
<dbReference type="EC" id="2.4.1.227" evidence="1"/>
<dbReference type="EMBL" id="CP000024">
    <property type="protein sequence ID" value="AAV62325.1"/>
    <property type="molecule type" value="Genomic_DNA"/>
</dbReference>
<dbReference type="RefSeq" id="WP_011225775.1">
    <property type="nucleotide sequence ID" value="NC_006449.1"/>
</dbReference>
<dbReference type="SMR" id="Q5M0D4"/>
<dbReference type="CAZy" id="GT28">
    <property type="family name" value="Glycosyltransferase Family 28"/>
</dbReference>
<dbReference type="KEGG" id="stc:str0732"/>
<dbReference type="HOGENOM" id="CLU_037404_0_0_9"/>
<dbReference type="UniPathway" id="UPA00219"/>
<dbReference type="GO" id="GO:0005886">
    <property type="term" value="C:plasma membrane"/>
    <property type="evidence" value="ECO:0007669"/>
    <property type="project" value="UniProtKB-SubCell"/>
</dbReference>
<dbReference type="GO" id="GO:0050511">
    <property type="term" value="F:undecaprenyldiphospho-muramoylpentapeptide beta-N-acetylglucosaminyltransferase activity"/>
    <property type="evidence" value="ECO:0007669"/>
    <property type="project" value="UniProtKB-UniRule"/>
</dbReference>
<dbReference type="GO" id="GO:0005975">
    <property type="term" value="P:carbohydrate metabolic process"/>
    <property type="evidence" value="ECO:0007669"/>
    <property type="project" value="InterPro"/>
</dbReference>
<dbReference type="GO" id="GO:0051301">
    <property type="term" value="P:cell division"/>
    <property type="evidence" value="ECO:0007669"/>
    <property type="project" value="UniProtKB-KW"/>
</dbReference>
<dbReference type="GO" id="GO:0071555">
    <property type="term" value="P:cell wall organization"/>
    <property type="evidence" value="ECO:0007669"/>
    <property type="project" value="UniProtKB-KW"/>
</dbReference>
<dbReference type="GO" id="GO:0030259">
    <property type="term" value="P:lipid glycosylation"/>
    <property type="evidence" value="ECO:0007669"/>
    <property type="project" value="UniProtKB-UniRule"/>
</dbReference>
<dbReference type="GO" id="GO:0009252">
    <property type="term" value="P:peptidoglycan biosynthetic process"/>
    <property type="evidence" value="ECO:0007669"/>
    <property type="project" value="UniProtKB-UniRule"/>
</dbReference>
<dbReference type="GO" id="GO:0008360">
    <property type="term" value="P:regulation of cell shape"/>
    <property type="evidence" value="ECO:0007669"/>
    <property type="project" value="UniProtKB-KW"/>
</dbReference>
<dbReference type="CDD" id="cd03785">
    <property type="entry name" value="GT28_MurG"/>
    <property type="match status" value="1"/>
</dbReference>
<dbReference type="Gene3D" id="3.40.50.2000">
    <property type="entry name" value="Glycogen Phosphorylase B"/>
    <property type="match status" value="2"/>
</dbReference>
<dbReference type="HAMAP" id="MF_00033">
    <property type="entry name" value="MurG"/>
    <property type="match status" value="1"/>
</dbReference>
<dbReference type="InterPro" id="IPR006009">
    <property type="entry name" value="GlcNAc_MurG"/>
</dbReference>
<dbReference type="InterPro" id="IPR007235">
    <property type="entry name" value="Glyco_trans_28_C"/>
</dbReference>
<dbReference type="InterPro" id="IPR004276">
    <property type="entry name" value="GlycoTrans_28_N"/>
</dbReference>
<dbReference type="PANTHER" id="PTHR21015:SF27">
    <property type="entry name" value="UDP-N-ACETYLGLUCOSAMINE--N-ACETYLMURAMYL-(PENTAPEPTIDE) PYROPHOSPHORYL-UNDECAPRENOL N-ACETYLGLUCOSAMINE TRANSFERASE"/>
    <property type="match status" value="1"/>
</dbReference>
<dbReference type="PANTHER" id="PTHR21015">
    <property type="entry name" value="UDP-N-ACETYLGLUCOSAMINE--N-ACETYLMURAMYL-(PENTAPEPTIDE) PYROPHOSPHORYL-UNDECAPRENOL N-ACETYLGLUCOSAMINE TRANSFERASE 1"/>
    <property type="match status" value="1"/>
</dbReference>
<dbReference type="Pfam" id="PF04101">
    <property type="entry name" value="Glyco_tran_28_C"/>
    <property type="match status" value="1"/>
</dbReference>
<dbReference type="Pfam" id="PF03033">
    <property type="entry name" value="Glyco_transf_28"/>
    <property type="match status" value="1"/>
</dbReference>
<dbReference type="SUPFAM" id="SSF53756">
    <property type="entry name" value="UDP-Glycosyltransferase/glycogen phosphorylase"/>
    <property type="match status" value="1"/>
</dbReference>
<sequence>MAKSKKIVFTGGGTVGHVTLNLILIPKFLKDGWEVHYIGDKHGVEHEQIDKSGLDVTFHSIATGKLRRYFSWQNMLDVFKVGWGILQSIAIIAKIRPQALFSKGGFVSVPPVIASKLLRVPVYVHESDLSMGLANKIAYKFATTMFTTFEQSKTLVKTRHVGAITKVGMTRFDNSDQLDKIKEQFDEKLKTVLFIGGSAGAKVFNDFISKTPELIENYNIINISGDSSLNTLERHLYRVDYVTDLYQPLMDMADLVVTRGGSNTIFELLAMKKLHLIVPLGKEASRGDQLENADYFERKGYARQLQEPELSWETLKHELEQLVEHAETYKEAMAKSEEITSPDDFYNLLVTSISNK</sequence>
<comment type="function">
    <text evidence="1">Cell wall formation. Catalyzes the transfer of a GlcNAc subunit on undecaprenyl-pyrophosphoryl-MurNAc-pentapeptide (lipid intermediate I) to form undecaprenyl-pyrophosphoryl-MurNAc-(pentapeptide)GlcNAc (lipid intermediate II).</text>
</comment>
<comment type="catalytic activity">
    <reaction evidence="1">
        <text>Mur2Ac(oyl-L-Ala-gamma-D-Glu-L-Lys-D-Ala-D-Ala)-di-trans,octa-cis-undecaprenyl diphosphate + UDP-N-acetyl-alpha-D-glucosamine = beta-D-GlcNAc-(1-&gt;4)-Mur2Ac(oyl-L-Ala-gamma-D-Glu-L-Lys-D-Ala-D-Ala)-di-trans,octa-cis-undecaprenyl diphosphate + UDP + H(+)</text>
        <dbReference type="Rhea" id="RHEA:23192"/>
        <dbReference type="ChEBI" id="CHEBI:15378"/>
        <dbReference type="ChEBI" id="CHEBI:57705"/>
        <dbReference type="ChEBI" id="CHEBI:58223"/>
        <dbReference type="ChEBI" id="CHEBI:60032"/>
        <dbReference type="ChEBI" id="CHEBI:60033"/>
        <dbReference type="EC" id="2.4.1.227"/>
    </reaction>
</comment>
<comment type="pathway">
    <text evidence="1">Cell wall biogenesis; peptidoglycan biosynthesis.</text>
</comment>
<comment type="subcellular location">
    <subcellularLocation>
        <location evidence="1">Cell membrane</location>
        <topology evidence="1">Peripheral membrane protein</topology>
        <orientation evidence="1">Cytoplasmic side</orientation>
    </subcellularLocation>
</comment>
<comment type="similarity">
    <text evidence="1">Belongs to the glycosyltransferase 28 family. MurG subfamily.</text>
</comment>